<name>IOLG_THEMA</name>
<proteinExistence type="evidence at protein level"/>
<feature type="chain" id="PRO_0000440854" description="Myo-inositol 2-dehydrogenase">
    <location>
        <begin position="1"/>
        <end position="334"/>
    </location>
</feature>
<feature type="strand" evidence="6">
    <location>
        <begin position="2"/>
        <end position="6"/>
    </location>
</feature>
<feature type="helix" evidence="6">
    <location>
        <begin position="10"/>
        <end position="18"/>
    </location>
</feature>
<feature type="helix" evidence="6">
    <location>
        <begin position="19"/>
        <end position="21"/>
    </location>
</feature>
<feature type="strand" evidence="6">
    <location>
        <begin position="25"/>
        <end position="31"/>
    </location>
</feature>
<feature type="helix" evidence="6">
    <location>
        <begin position="35"/>
        <end position="45"/>
    </location>
</feature>
<feature type="strand" evidence="6">
    <location>
        <begin position="48"/>
        <end position="53"/>
    </location>
</feature>
<feature type="helix" evidence="6">
    <location>
        <begin position="54"/>
        <end position="59"/>
    </location>
</feature>
<feature type="strand" evidence="6">
    <location>
        <begin position="65"/>
        <end position="68"/>
    </location>
</feature>
<feature type="helix" evidence="6">
    <location>
        <begin position="72"/>
        <end position="74"/>
    </location>
</feature>
<feature type="helix" evidence="6">
    <location>
        <begin position="75"/>
        <end position="84"/>
    </location>
</feature>
<feature type="strand" evidence="6">
    <location>
        <begin position="88"/>
        <end position="93"/>
    </location>
</feature>
<feature type="helix" evidence="6">
    <location>
        <begin position="99"/>
        <end position="112"/>
    </location>
</feature>
<feature type="strand" evidence="6">
    <location>
        <begin position="116"/>
        <end position="119"/>
    </location>
</feature>
<feature type="helix" evidence="6">
    <location>
        <begin position="121"/>
        <end position="124"/>
    </location>
</feature>
<feature type="helix" evidence="6">
    <location>
        <begin position="126"/>
        <end position="136"/>
    </location>
</feature>
<feature type="turn" evidence="6">
    <location>
        <begin position="137"/>
        <end position="140"/>
    </location>
</feature>
<feature type="strand" evidence="6">
    <location>
        <begin position="141"/>
        <end position="151"/>
    </location>
</feature>
<feature type="helix" evidence="6">
    <location>
        <begin position="158"/>
        <end position="162"/>
    </location>
</feature>
<feature type="turn" evidence="6">
    <location>
        <begin position="163"/>
        <end position="165"/>
    </location>
</feature>
<feature type="helix" evidence="6">
    <location>
        <begin position="167"/>
        <end position="170"/>
    </location>
</feature>
<feature type="helix" evidence="6">
    <location>
        <begin position="172"/>
        <end position="183"/>
    </location>
</feature>
<feature type="strand" evidence="6">
    <location>
        <begin position="187"/>
        <end position="195"/>
    </location>
</feature>
<feature type="helix" evidence="6">
    <location>
        <begin position="200"/>
        <end position="204"/>
    </location>
</feature>
<feature type="strand" evidence="6">
    <location>
        <begin position="209"/>
        <end position="217"/>
    </location>
</feature>
<feature type="strand" evidence="6">
    <location>
        <begin position="222"/>
        <end position="229"/>
    </location>
</feature>
<feature type="strand" evidence="6">
    <location>
        <begin position="236"/>
        <end position="243"/>
    </location>
</feature>
<feature type="strand" evidence="6">
    <location>
        <begin position="246"/>
        <end position="250"/>
    </location>
</feature>
<feature type="strand" evidence="6">
    <location>
        <begin position="257"/>
        <end position="262"/>
    </location>
</feature>
<feature type="strand" evidence="6">
    <location>
        <begin position="265"/>
        <end position="268"/>
    </location>
</feature>
<feature type="helix" evidence="6">
    <location>
        <begin position="275"/>
        <end position="296"/>
    </location>
</feature>
<feature type="helix" evidence="6">
    <location>
        <begin position="304"/>
        <end position="323"/>
    </location>
</feature>
<feature type="helix" evidence="6">
    <location>
        <begin position="329"/>
        <end position="331"/>
    </location>
</feature>
<organism>
    <name type="scientific">Thermotoga maritima (strain ATCC 43589 / DSM 3109 / JCM 10099 / NBRC 100826 / MSB8)</name>
    <dbReference type="NCBI Taxonomy" id="243274"/>
    <lineage>
        <taxon>Bacteria</taxon>
        <taxon>Thermotogati</taxon>
        <taxon>Thermotogota</taxon>
        <taxon>Thermotogae</taxon>
        <taxon>Thermotogales</taxon>
        <taxon>Thermotogaceae</taxon>
        <taxon>Thermotoga</taxon>
    </lineage>
</organism>
<dbReference type="EC" id="1.1.1.18" evidence="1"/>
<dbReference type="EMBL" id="AE000512">
    <property type="protein sequence ID" value="AAD35499.1"/>
    <property type="molecule type" value="Genomic_DNA"/>
</dbReference>
<dbReference type="PIR" id="D72381">
    <property type="entry name" value="D72381"/>
</dbReference>
<dbReference type="RefSeq" id="NP_228224.1">
    <property type="nucleotide sequence ID" value="NC_000853.1"/>
</dbReference>
<dbReference type="RefSeq" id="WP_004083264.1">
    <property type="nucleotide sequence ID" value="NC_000853.1"/>
</dbReference>
<dbReference type="PDB" id="3EZY">
    <property type="method" value="X-ray"/>
    <property type="resolution" value="2.04 A"/>
    <property type="chains" value="A/B/C/D=2-334"/>
</dbReference>
<dbReference type="PDBsum" id="3EZY"/>
<dbReference type="SMR" id="Q9WYP5"/>
<dbReference type="FunCoup" id="Q9WYP5">
    <property type="interactions" value="265"/>
</dbReference>
<dbReference type="STRING" id="243274.TM_0414"/>
<dbReference type="PaxDb" id="243274-THEMA_02655"/>
<dbReference type="DNASU" id="897415"/>
<dbReference type="EnsemblBacteria" id="AAD35499">
    <property type="protein sequence ID" value="AAD35499"/>
    <property type="gene ID" value="TM_0414"/>
</dbReference>
<dbReference type="KEGG" id="tma:TM0414"/>
<dbReference type="KEGG" id="tmi:THEMA_02655"/>
<dbReference type="KEGG" id="tmm:Tmari_0411"/>
<dbReference type="KEGG" id="tmw:THMA_0420"/>
<dbReference type="PATRIC" id="fig|243274.17.peg.412"/>
<dbReference type="eggNOG" id="COG0673">
    <property type="taxonomic scope" value="Bacteria"/>
</dbReference>
<dbReference type="InParanoid" id="Q9WYP5"/>
<dbReference type="OrthoDB" id="40945at2"/>
<dbReference type="BioCyc" id="MetaCyc:MONOMER-17948"/>
<dbReference type="BRENDA" id="1.1.1.369">
    <property type="organism ID" value="6331"/>
</dbReference>
<dbReference type="UniPathway" id="UPA00914"/>
<dbReference type="EvolutionaryTrace" id="Q9WYP5"/>
<dbReference type="Proteomes" id="UP000008183">
    <property type="component" value="Chromosome"/>
</dbReference>
<dbReference type="GO" id="GO:0050112">
    <property type="term" value="F:inositol 2-dehydrogenase (NAD+) activity"/>
    <property type="evidence" value="ECO:0007669"/>
    <property type="project" value="UniProtKB-EC"/>
</dbReference>
<dbReference type="GO" id="GO:0000166">
    <property type="term" value="F:nucleotide binding"/>
    <property type="evidence" value="ECO:0007669"/>
    <property type="project" value="InterPro"/>
</dbReference>
<dbReference type="GO" id="GO:0006020">
    <property type="term" value="P:inositol metabolic process"/>
    <property type="evidence" value="ECO:0007669"/>
    <property type="project" value="UniProtKB-UniPathway"/>
</dbReference>
<dbReference type="FunFam" id="3.30.360.10:FF:000023">
    <property type="entry name" value="Inositol 2-dehydrogenase"/>
    <property type="match status" value="1"/>
</dbReference>
<dbReference type="Gene3D" id="3.30.360.10">
    <property type="entry name" value="Dihydrodipicolinate Reductase, domain 2"/>
    <property type="match status" value="1"/>
</dbReference>
<dbReference type="Gene3D" id="3.40.50.720">
    <property type="entry name" value="NAD(P)-binding Rossmann-like Domain"/>
    <property type="match status" value="1"/>
</dbReference>
<dbReference type="InterPro" id="IPR000683">
    <property type="entry name" value="Gfo/Idh/MocA-like_OxRdtase_N"/>
</dbReference>
<dbReference type="InterPro" id="IPR055170">
    <property type="entry name" value="GFO_IDH_MocA-like_dom"/>
</dbReference>
<dbReference type="InterPro" id="IPR030827">
    <property type="entry name" value="Myo_inos_IolG"/>
</dbReference>
<dbReference type="InterPro" id="IPR036291">
    <property type="entry name" value="NAD(P)-bd_dom_sf"/>
</dbReference>
<dbReference type="NCBIfam" id="TIGR04380">
    <property type="entry name" value="myo_inos_iolG"/>
    <property type="match status" value="1"/>
</dbReference>
<dbReference type="PANTHER" id="PTHR42840:SF3">
    <property type="entry name" value="BINDING ROSSMANN FOLD OXIDOREDUCTASE, PUTATIVE (AFU_ORTHOLOGUE AFUA_2G10240)-RELATED"/>
    <property type="match status" value="1"/>
</dbReference>
<dbReference type="PANTHER" id="PTHR42840">
    <property type="entry name" value="NAD(P)-BINDING ROSSMANN-FOLD SUPERFAMILY PROTEIN-RELATED"/>
    <property type="match status" value="1"/>
</dbReference>
<dbReference type="Pfam" id="PF01408">
    <property type="entry name" value="GFO_IDH_MocA"/>
    <property type="match status" value="1"/>
</dbReference>
<dbReference type="Pfam" id="PF22725">
    <property type="entry name" value="GFO_IDH_MocA_C3"/>
    <property type="match status" value="1"/>
</dbReference>
<dbReference type="SUPFAM" id="SSF55347">
    <property type="entry name" value="Glyceraldehyde-3-phosphate dehydrogenase-like, C-terminal domain"/>
    <property type="match status" value="1"/>
</dbReference>
<dbReference type="SUPFAM" id="SSF51735">
    <property type="entry name" value="NAD(P)-binding Rossmann-fold domains"/>
    <property type="match status" value="1"/>
</dbReference>
<protein>
    <recommendedName>
        <fullName evidence="4">Myo-inositol 2-dehydrogenase</fullName>
        <ecNumber evidence="1">1.1.1.18</ecNumber>
    </recommendedName>
</protein>
<gene>
    <name evidence="2" type="primary">iolG</name>
    <name evidence="5" type="ordered locus">TM_0414</name>
</gene>
<evidence type="ECO:0000269" key="1">
    <source>
    </source>
</evidence>
<evidence type="ECO:0000303" key="2">
    <source>
    </source>
</evidence>
<evidence type="ECO:0000305" key="3"/>
<evidence type="ECO:0000305" key="4">
    <source>
    </source>
</evidence>
<evidence type="ECO:0000312" key="5">
    <source>
        <dbReference type="EMBL" id="AAD35499.1"/>
    </source>
</evidence>
<evidence type="ECO:0007829" key="6">
    <source>
        <dbReference type="PDB" id="3EZY"/>
    </source>
</evidence>
<keyword id="KW-0002">3D-structure</keyword>
<keyword id="KW-0520">NAD</keyword>
<keyword id="KW-0560">Oxidoreductase</keyword>
<keyword id="KW-1185">Reference proteome</keyword>
<sequence>MRIGVIGLGRIGTIHAENLKMIDDAILYAISDVREDRLREMKEKLGVEKAYKDPHELIEDPNVDAVLVCSSTNTHSELVIACAKAKKHVFCEKPLSLNLADVDRMIEETKKADVILFTGFNRRFDRNFKKLKEAVENGTIGKPHVLRITSRDPAPPPLDYIRVSGGIFLDMTIHDFDMARYIMGEEVEEVFADGSVLVDEEIGKAGDVDTAVVVLRFKSGALGVIDNSRRAVYGYDQRIEVFGSKGRIFADNVRETTVVLTDEQGDRGSRYLYFFLERYRDSYLEELKTFIKNVKSGEPPAVSGEDGKMALLLGYAAKKSLEEKRSVKLEEVIG</sequence>
<accession>Q9WYP5</accession>
<accession>G4FHX3</accession>
<reference key="1">
    <citation type="journal article" date="1999" name="Nature">
        <title>Evidence for lateral gene transfer between Archaea and Bacteria from genome sequence of Thermotoga maritima.</title>
        <authorList>
            <person name="Nelson K.E."/>
            <person name="Clayton R.A."/>
            <person name="Gill S.R."/>
            <person name="Gwinn M.L."/>
            <person name="Dodson R.J."/>
            <person name="Haft D.H."/>
            <person name="Hickey E.K."/>
            <person name="Peterson J.D."/>
            <person name="Nelson W.C."/>
            <person name="Ketchum K.A."/>
            <person name="McDonald L.A."/>
            <person name="Utterback T.R."/>
            <person name="Malek J.A."/>
            <person name="Linher K.D."/>
            <person name="Garrett M.M."/>
            <person name="Stewart A.M."/>
            <person name="Cotton M.D."/>
            <person name="Pratt M.S."/>
            <person name="Phillips C.A."/>
            <person name="Richardson D.L."/>
            <person name="Heidelberg J.F."/>
            <person name="Sutton G.G."/>
            <person name="Fleischmann R.D."/>
            <person name="Eisen J.A."/>
            <person name="White O."/>
            <person name="Salzberg S.L."/>
            <person name="Smith H.O."/>
            <person name="Venter J.C."/>
            <person name="Fraser C.M."/>
        </authorList>
    </citation>
    <scope>NUCLEOTIDE SEQUENCE [LARGE SCALE GENOMIC DNA]</scope>
    <source>
        <strain>ATCC 43589 / DSM 3109 / JCM 10099 / NBRC 100826 / MSB8</strain>
    </source>
</reference>
<reference key="2">
    <citation type="journal article" date="2013" name="Environ. Microbiol.">
        <title>Novel inositol catabolic pathway in Thermotoga maritima.</title>
        <authorList>
            <person name="Rodionova I.A."/>
            <person name="Leyn S.A."/>
            <person name="Burkart M.D."/>
            <person name="Boucher N."/>
            <person name="Noll K.M."/>
            <person name="Osterman A.L."/>
            <person name="Rodionov D.A."/>
        </authorList>
    </citation>
    <scope>FUNCTION</scope>
    <scope>CATALYTIC ACTIVITY</scope>
    <scope>SUBSTRATE SPECIFICITY</scope>
    <scope>BIOPHYSICOCHEMICAL PROPERTIES</scope>
    <scope>PATHWAY</scope>
</reference>
<reference key="3">
    <citation type="submission" date="2008-10" db="PDB data bank">
        <title>Crystal structure of probable dehydrogenase TM_0414 from Thermotoga maritima.</title>
        <authorList>
            <person name="Ramagopal U.A."/>
            <person name="Toro R."/>
            <person name="Freeman J."/>
            <person name="Chang S."/>
            <person name="Maletic M."/>
            <person name="Gheyi T."/>
            <person name="Burley S.K."/>
            <person name="Almo S.C."/>
        </authorList>
    </citation>
    <scope>X-RAY CRYSTALLOGRAPHY (2.04 ANGSTROMS) IN COMPLEX WITH (4S)- AND (4R)-2-METHYLPENTANE-2,4-DIOL</scope>
</reference>
<comment type="function">
    <text evidence="1">Catalyzes the NAD(+)-dependent oxidation of myo-inositol (MI) to 2-keto-myo-inositol (scyllo-inosose), and thus probably functions in a myo-inositol degradation pathway together with IolM, IolN and IolO. Has no activity with scyllo-inositol and much reduced activity (78-fold lower catalytic efficiency) with 1D-chiro-inositol.</text>
</comment>
<comment type="catalytic activity">
    <reaction evidence="1">
        <text>myo-inositol + NAD(+) = scyllo-inosose + NADH + H(+)</text>
        <dbReference type="Rhea" id="RHEA:16949"/>
        <dbReference type="ChEBI" id="CHEBI:15378"/>
        <dbReference type="ChEBI" id="CHEBI:17268"/>
        <dbReference type="ChEBI" id="CHEBI:17811"/>
        <dbReference type="ChEBI" id="CHEBI:57540"/>
        <dbReference type="ChEBI" id="CHEBI:57945"/>
        <dbReference type="EC" id="1.1.1.18"/>
    </reaction>
</comment>
<comment type="biophysicochemical properties">
    <kinetics>
        <KM evidence="1">0.1 mM for myo-inositol</KM>
        <KM evidence="1">2.9 mM for 1D-chiro-inositol</KM>
        <text evidence="1">kcat is 2.7 sec(-1) with myo-inositol as substrate. kcat is 1 sec(-1) with 1D-chiro-inositol as substrate.</text>
    </kinetics>
</comment>
<comment type="pathway">
    <text evidence="4">Polyol metabolism; myo-inositol metabolism.</text>
</comment>
<comment type="similarity">
    <text evidence="3">Belongs to the Gfo/Idh/MocA family.</text>
</comment>